<reference key="1">
    <citation type="journal article" date="2011" name="J. Bacteriol.">
        <title>Comparative genomics of 28 Salmonella enterica isolates: evidence for CRISPR-mediated adaptive sublineage evolution.</title>
        <authorList>
            <person name="Fricke W.F."/>
            <person name="Mammel M.K."/>
            <person name="McDermott P.F."/>
            <person name="Tartera C."/>
            <person name="White D.G."/>
            <person name="Leclerc J.E."/>
            <person name="Ravel J."/>
            <person name="Cebula T.A."/>
        </authorList>
    </citation>
    <scope>NUCLEOTIDE SEQUENCE [LARGE SCALE GENOMIC DNA]</scope>
    <source>
        <strain>SL476</strain>
    </source>
</reference>
<protein>
    <recommendedName>
        <fullName evidence="1">G/U mismatch-specific DNA glycosylase</fullName>
        <ecNumber evidence="1">3.2.2.28</ecNumber>
    </recommendedName>
    <alternativeName>
        <fullName evidence="1">Double-strand-specific uracil glycosylase</fullName>
    </alternativeName>
    <alternativeName>
        <fullName evidence="1">Mismatch-specific uracil DNA-glycosylase</fullName>
        <shortName evidence="1">MUG</shortName>
    </alternativeName>
</protein>
<name>MUG_SALHS</name>
<dbReference type="EC" id="3.2.2.28" evidence="1"/>
<dbReference type="EMBL" id="CP001120">
    <property type="protein sequence ID" value="ACF69707.1"/>
    <property type="molecule type" value="Genomic_DNA"/>
</dbReference>
<dbReference type="RefSeq" id="WP_000237776.1">
    <property type="nucleotide sequence ID" value="NC_011083.1"/>
</dbReference>
<dbReference type="SMR" id="B4TI63"/>
<dbReference type="KEGG" id="seh:SeHA_C3466"/>
<dbReference type="HOGENOM" id="CLU_042829_3_1_6"/>
<dbReference type="Proteomes" id="UP000001866">
    <property type="component" value="Chromosome"/>
</dbReference>
<dbReference type="GO" id="GO:0005737">
    <property type="term" value="C:cytoplasm"/>
    <property type="evidence" value="ECO:0007669"/>
    <property type="project" value="UniProtKB-SubCell"/>
</dbReference>
<dbReference type="GO" id="GO:0003677">
    <property type="term" value="F:DNA binding"/>
    <property type="evidence" value="ECO:0007669"/>
    <property type="project" value="UniProtKB-KW"/>
</dbReference>
<dbReference type="GO" id="GO:0008263">
    <property type="term" value="F:pyrimidine-specific mismatch base pair DNA N-glycosylase activity"/>
    <property type="evidence" value="ECO:0007669"/>
    <property type="project" value="UniProtKB-UniRule"/>
</dbReference>
<dbReference type="GO" id="GO:0004844">
    <property type="term" value="F:uracil DNA N-glycosylase activity"/>
    <property type="evidence" value="ECO:0007669"/>
    <property type="project" value="TreeGrafter"/>
</dbReference>
<dbReference type="GO" id="GO:0006285">
    <property type="term" value="P:base-excision repair, AP site formation"/>
    <property type="evidence" value="ECO:0007669"/>
    <property type="project" value="UniProtKB-UniRule"/>
</dbReference>
<dbReference type="CDD" id="cd10028">
    <property type="entry name" value="UDG-F2_TDG_MUG"/>
    <property type="match status" value="1"/>
</dbReference>
<dbReference type="Gene3D" id="3.40.470.10">
    <property type="entry name" value="Uracil-DNA glycosylase-like domain"/>
    <property type="match status" value="1"/>
</dbReference>
<dbReference type="HAMAP" id="MF_01956">
    <property type="entry name" value="MUG"/>
    <property type="match status" value="1"/>
</dbReference>
<dbReference type="InterPro" id="IPR015637">
    <property type="entry name" value="MUG/TDG"/>
</dbReference>
<dbReference type="InterPro" id="IPR023502">
    <property type="entry name" value="MUG_bact"/>
</dbReference>
<dbReference type="InterPro" id="IPR005122">
    <property type="entry name" value="Uracil-DNA_glycosylase-like"/>
</dbReference>
<dbReference type="InterPro" id="IPR036895">
    <property type="entry name" value="Uracil-DNA_glycosylase-like_sf"/>
</dbReference>
<dbReference type="NCBIfam" id="NF007570">
    <property type="entry name" value="PRK10201.1"/>
    <property type="match status" value="1"/>
</dbReference>
<dbReference type="PANTHER" id="PTHR12159">
    <property type="entry name" value="G/T AND G/U MISMATCH-SPECIFIC DNA GLYCOSYLASE"/>
    <property type="match status" value="1"/>
</dbReference>
<dbReference type="PANTHER" id="PTHR12159:SF9">
    <property type="entry name" value="G_T MISMATCH-SPECIFIC THYMINE DNA GLYCOSYLASE"/>
    <property type="match status" value="1"/>
</dbReference>
<dbReference type="Pfam" id="PF03167">
    <property type="entry name" value="UDG"/>
    <property type="match status" value="1"/>
</dbReference>
<dbReference type="SUPFAM" id="SSF52141">
    <property type="entry name" value="Uracil-DNA glycosylase-like"/>
    <property type="match status" value="1"/>
</dbReference>
<organism>
    <name type="scientific">Salmonella heidelberg (strain SL476)</name>
    <dbReference type="NCBI Taxonomy" id="454169"/>
    <lineage>
        <taxon>Bacteria</taxon>
        <taxon>Pseudomonadati</taxon>
        <taxon>Pseudomonadota</taxon>
        <taxon>Gammaproteobacteria</taxon>
        <taxon>Enterobacterales</taxon>
        <taxon>Enterobacteriaceae</taxon>
        <taxon>Salmonella</taxon>
    </lineage>
</organism>
<accession>B4TI63</accession>
<sequence>MVKDILAPGLRVVFCGINPGLSSANTGFPFAHPANRFWKVIHLAGFTDRQLKPEEAEKLLDFRCGVTKLVDRPTVQATEVKLHELRSGGRNLIEKIEDYQPAALAVLGKQAFEQGFSQRGIAWGKQKIAIGATMVWVLPNPSGLNRIKTEKLVEAYRELDQALIMRGL</sequence>
<gene>
    <name evidence="1" type="primary">mug</name>
    <name type="ordered locus">SeHA_C3466</name>
</gene>
<comment type="function">
    <text evidence="1">Excises ethenocytosine and uracil, which can arise by alkylation or deamination of cytosine, respectively, from the corresponding mispairs with guanine in ds-DNA. It is capable of hydrolyzing the carbon-nitrogen bond between the sugar-phosphate backbone of the DNA and the mispaired base. The complementary strand guanine functions in substrate recognition. Required for DNA damage lesion repair in stationary-phase cells.</text>
</comment>
<comment type="catalytic activity">
    <reaction evidence="1">
        <text>Specifically hydrolyzes mismatched double-stranded DNA and polynucleotides, releasing free uracil.</text>
        <dbReference type="EC" id="3.2.2.28"/>
    </reaction>
</comment>
<comment type="subunit">
    <text evidence="1">Binds DNA as a monomer.</text>
</comment>
<comment type="subcellular location">
    <subcellularLocation>
        <location evidence="1">Cytoplasm</location>
    </subcellularLocation>
</comment>
<comment type="similarity">
    <text evidence="1">Belongs to the uracil-DNA glycosylase (UDG) superfamily. TDG/mug family.</text>
</comment>
<keyword id="KW-0963">Cytoplasm</keyword>
<keyword id="KW-0227">DNA damage</keyword>
<keyword id="KW-0228">DNA excision</keyword>
<keyword id="KW-0234">DNA repair</keyword>
<keyword id="KW-0238">DNA-binding</keyword>
<keyword id="KW-0378">Hydrolase</keyword>
<feature type="chain" id="PRO_1000188966" description="G/U mismatch-specific DNA glycosylase">
    <location>
        <begin position="1"/>
        <end position="168"/>
    </location>
</feature>
<proteinExistence type="inferred from homology"/>
<evidence type="ECO:0000255" key="1">
    <source>
        <dbReference type="HAMAP-Rule" id="MF_01956"/>
    </source>
</evidence>